<sequence length="140" mass="15338">MKVFSTVLLAIVACCAVAEAKTFGKCELAKALANNGIAKASLPDWVCLVQNESAFSTSATNKNKNGSTDYGIFQINNKYWCDSGYGSNDCKIACKNLLNDDITDDIKCAKLIHKRHGFNAWYGWKNHCNGKKLPNVSSCF</sequence>
<dbReference type="EC" id="3.2.1.17"/>
<dbReference type="EMBL" id="U28809">
    <property type="protein sequence ID" value="AAC47326.1"/>
    <property type="molecule type" value="Genomic_DNA"/>
</dbReference>
<dbReference type="EMBL" id="DQ007317">
    <property type="protein sequence ID" value="AAY24699.1"/>
    <property type="molecule type" value="mRNA"/>
</dbReference>
<dbReference type="EMBL" id="AAAB01008807">
    <property type="protein sequence ID" value="EAA45417.1"/>
    <property type="molecule type" value="Genomic_DNA"/>
</dbReference>
<dbReference type="PIR" id="JC5003">
    <property type="entry name" value="JC5003"/>
</dbReference>
<dbReference type="SMR" id="Q17005"/>
<dbReference type="FunCoup" id="Q17005">
    <property type="interactions" value="11"/>
</dbReference>
<dbReference type="STRING" id="7165.Q17005"/>
<dbReference type="CAZy" id="GH22">
    <property type="family name" value="Glycoside Hydrolase Family 22"/>
</dbReference>
<dbReference type="PaxDb" id="7165-AGAP007347-PA"/>
<dbReference type="EnsemblMetazoa" id="AGAP007347-RA">
    <property type="protein sequence ID" value="AGAP007347-PA"/>
    <property type="gene ID" value="AGAP007347"/>
</dbReference>
<dbReference type="GeneID" id="1269831"/>
<dbReference type="KEGG" id="aga:1269831"/>
<dbReference type="VEuPathDB" id="VectorBase:AGAMI1_013470"/>
<dbReference type="VEuPathDB" id="VectorBase:AGAP007347"/>
<dbReference type="eggNOG" id="ENOG502S4CB">
    <property type="taxonomic scope" value="Eukaryota"/>
</dbReference>
<dbReference type="HOGENOM" id="CLU_111620_0_1_1"/>
<dbReference type="InParanoid" id="Q17005"/>
<dbReference type="OMA" id="YWCSNTS"/>
<dbReference type="PhylomeDB" id="Q17005"/>
<dbReference type="BRENDA" id="3.2.1.17">
    <property type="organism ID" value="358"/>
</dbReference>
<dbReference type="Proteomes" id="UP000007062">
    <property type="component" value="Chromosome 2L"/>
</dbReference>
<dbReference type="GO" id="GO:0003796">
    <property type="term" value="F:lysozyme activity"/>
    <property type="evidence" value="ECO:0000318"/>
    <property type="project" value="GO_Central"/>
</dbReference>
<dbReference type="GO" id="GO:0042742">
    <property type="term" value="P:defense response to bacterium"/>
    <property type="evidence" value="ECO:0007669"/>
    <property type="project" value="UniProtKB-KW"/>
</dbReference>
<dbReference type="GO" id="GO:0031640">
    <property type="term" value="P:killing of cells of another organism"/>
    <property type="evidence" value="ECO:0007669"/>
    <property type="project" value="UniProtKB-KW"/>
</dbReference>
<dbReference type="CDD" id="cd16899">
    <property type="entry name" value="LYZ_C_invert"/>
    <property type="match status" value="1"/>
</dbReference>
<dbReference type="FunFam" id="1.10.530.10:FF:000024">
    <property type="entry name" value="C-type lysozyme"/>
    <property type="match status" value="1"/>
</dbReference>
<dbReference type="Gene3D" id="1.10.530.10">
    <property type="match status" value="1"/>
</dbReference>
<dbReference type="InterPro" id="IPR001916">
    <property type="entry name" value="Glyco_hydro_22"/>
</dbReference>
<dbReference type="InterPro" id="IPR019799">
    <property type="entry name" value="Glyco_hydro_22_CS"/>
</dbReference>
<dbReference type="InterPro" id="IPR000974">
    <property type="entry name" value="Glyco_hydro_22_lys"/>
</dbReference>
<dbReference type="InterPro" id="IPR023346">
    <property type="entry name" value="Lysozyme-like_dom_sf"/>
</dbReference>
<dbReference type="PANTHER" id="PTHR11407:SF36">
    <property type="entry name" value="GEO02684P1-RELATED"/>
    <property type="match status" value="1"/>
</dbReference>
<dbReference type="PANTHER" id="PTHR11407">
    <property type="entry name" value="LYSOZYME C"/>
    <property type="match status" value="1"/>
</dbReference>
<dbReference type="Pfam" id="PF00062">
    <property type="entry name" value="Lys"/>
    <property type="match status" value="1"/>
</dbReference>
<dbReference type="PRINTS" id="PR00137">
    <property type="entry name" value="LYSOZYME"/>
</dbReference>
<dbReference type="PRINTS" id="PR00135">
    <property type="entry name" value="LYZLACT"/>
</dbReference>
<dbReference type="SMART" id="SM00263">
    <property type="entry name" value="LYZ1"/>
    <property type="match status" value="1"/>
</dbReference>
<dbReference type="SUPFAM" id="SSF53955">
    <property type="entry name" value="Lysozyme-like"/>
    <property type="match status" value="1"/>
</dbReference>
<dbReference type="PROSITE" id="PS00128">
    <property type="entry name" value="GLYCOSYL_HYDROL_F22_1"/>
    <property type="match status" value="1"/>
</dbReference>
<dbReference type="PROSITE" id="PS51348">
    <property type="entry name" value="GLYCOSYL_HYDROL_F22_2"/>
    <property type="match status" value="1"/>
</dbReference>
<evidence type="ECO:0000255" key="1"/>
<evidence type="ECO:0000255" key="2">
    <source>
        <dbReference type="PROSITE-ProRule" id="PRU00680"/>
    </source>
</evidence>
<evidence type="ECO:0000269" key="3">
    <source>
    </source>
</evidence>
<evidence type="ECO:0000305" key="4"/>
<name>LYSC1_ANOGA</name>
<reference key="1">
    <citation type="journal article" date="1996" name="Gene">
        <title>Analysis of a lysozyme gene from the malaria vector mosquito, Anopheles gambiae.</title>
        <authorList>
            <person name="Kang D."/>
            <person name="Romans P."/>
            <person name="Lee J.Y."/>
        </authorList>
    </citation>
    <scope>NUCLEOTIDE SEQUENCE [GENOMIC DNA]</scope>
</reference>
<reference key="2">
    <citation type="journal article" date="2005" name="Gene">
        <title>Characterization of the c-type lysozyme gene family in Anopheles gambiae.</title>
        <authorList>
            <person name="Li B."/>
            <person name="Calvo E."/>
            <person name="Marinotti O."/>
            <person name="James A.A."/>
            <person name="Paskewitz S.M."/>
        </authorList>
    </citation>
    <scope>NUCLEOTIDE SEQUENCE [MRNA]</scope>
    <scope>FUNCTION</scope>
    <scope>TISSUE SPECIFICITY</scope>
    <scope>DEVELOPMENTAL STAGE</scope>
    <scope>INDUCTION</scope>
    <source>
        <strain>Pinkeye</strain>
    </source>
</reference>
<reference key="3">
    <citation type="journal article" date="2002" name="Science">
        <title>The genome sequence of the malaria mosquito Anopheles gambiae.</title>
        <authorList>
            <person name="Holt R.A."/>
            <person name="Subramanian G.M."/>
            <person name="Halpern A."/>
            <person name="Sutton G.G."/>
            <person name="Charlab R."/>
            <person name="Nusskern D.R."/>
            <person name="Wincker P."/>
            <person name="Clark A.G."/>
            <person name="Ribeiro J.M.C."/>
            <person name="Wides R."/>
            <person name="Salzberg S.L."/>
            <person name="Loftus B.J."/>
            <person name="Yandell M.D."/>
            <person name="Majoros W.H."/>
            <person name="Rusch D.B."/>
            <person name="Lai Z."/>
            <person name="Kraft C.L."/>
            <person name="Abril J.F."/>
            <person name="Anthouard V."/>
            <person name="Arensburger P."/>
            <person name="Atkinson P.W."/>
            <person name="Baden H."/>
            <person name="de Berardinis V."/>
            <person name="Baldwin D."/>
            <person name="Benes V."/>
            <person name="Biedler J."/>
            <person name="Blass C."/>
            <person name="Bolanos R."/>
            <person name="Boscus D."/>
            <person name="Barnstead M."/>
            <person name="Cai S."/>
            <person name="Center A."/>
            <person name="Chaturverdi K."/>
            <person name="Christophides G.K."/>
            <person name="Chrystal M.A.M."/>
            <person name="Clamp M."/>
            <person name="Cravchik A."/>
            <person name="Curwen V."/>
            <person name="Dana A."/>
            <person name="Delcher A."/>
            <person name="Dew I."/>
            <person name="Evans C.A."/>
            <person name="Flanigan M."/>
            <person name="Grundschober-Freimoser A."/>
            <person name="Friedli L."/>
            <person name="Gu Z."/>
            <person name="Guan P."/>
            <person name="Guigo R."/>
            <person name="Hillenmeyer M.E."/>
            <person name="Hladun S.L."/>
            <person name="Hogan J.R."/>
            <person name="Hong Y.S."/>
            <person name="Hoover J."/>
            <person name="Jaillon O."/>
            <person name="Ke Z."/>
            <person name="Kodira C.D."/>
            <person name="Kokoza E."/>
            <person name="Koutsos A."/>
            <person name="Letunic I."/>
            <person name="Levitsky A.A."/>
            <person name="Liang Y."/>
            <person name="Lin J.-J."/>
            <person name="Lobo N.F."/>
            <person name="Lopez J.R."/>
            <person name="Malek J.A."/>
            <person name="McIntosh T.C."/>
            <person name="Meister S."/>
            <person name="Miller J.R."/>
            <person name="Mobarry C."/>
            <person name="Mongin E."/>
            <person name="Murphy S.D."/>
            <person name="O'Brochta D.A."/>
            <person name="Pfannkoch C."/>
            <person name="Qi R."/>
            <person name="Regier M.A."/>
            <person name="Remington K."/>
            <person name="Shao H."/>
            <person name="Sharakhova M.V."/>
            <person name="Sitter C.D."/>
            <person name="Shetty J."/>
            <person name="Smith T.J."/>
            <person name="Strong R."/>
            <person name="Sun J."/>
            <person name="Thomasova D."/>
            <person name="Ton L.Q."/>
            <person name="Topalis P."/>
            <person name="Tu Z.J."/>
            <person name="Unger M.F."/>
            <person name="Walenz B."/>
            <person name="Wang A.H."/>
            <person name="Wang J."/>
            <person name="Wang M."/>
            <person name="Wang X."/>
            <person name="Woodford K.J."/>
            <person name="Wortman J.R."/>
            <person name="Wu M."/>
            <person name="Yao A."/>
            <person name="Zdobnov E.M."/>
            <person name="Zhang H."/>
            <person name="Zhao Q."/>
            <person name="Zhao S."/>
            <person name="Zhu S.C."/>
            <person name="Zhimulev I."/>
            <person name="Coluzzi M."/>
            <person name="della Torre A."/>
            <person name="Roth C.W."/>
            <person name="Louis C."/>
            <person name="Kalush F."/>
            <person name="Mural R.J."/>
            <person name="Myers E.W."/>
            <person name="Adams M.D."/>
            <person name="Smith H.O."/>
            <person name="Broder S."/>
            <person name="Gardner M.J."/>
            <person name="Fraser C.M."/>
            <person name="Birney E."/>
            <person name="Bork P."/>
            <person name="Brey P.T."/>
            <person name="Venter J.C."/>
            <person name="Weissenbach J."/>
            <person name="Kafatos F.C."/>
            <person name="Collins F.H."/>
            <person name="Hoffman S.L."/>
        </authorList>
    </citation>
    <scope>NUCLEOTIDE SEQUENCE [LARGE SCALE GENOMIC DNA]</scope>
    <source>
        <strain>PEST</strain>
    </source>
</reference>
<comment type="function">
    <text evidence="2 3">Lysozymes have primarily a bacteriolytic function; those in tissues and body fluids are associated with the monocyte-macrophage system and enhance the activity of immunoagents.</text>
</comment>
<comment type="catalytic activity">
    <reaction>
        <text>Hydrolysis of (1-&gt;4)-beta-linkages between N-acetylmuramic acid and N-acetyl-D-glucosamine residues in a peptidoglycan and between N-acetyl-D-glucosamine residues in chitodextrins.</text>
        <dbReference type="EC" id="3.2.1.17"/>
    </reaction>
</comment>
<comment type="tissue specificity">
    <text evidence="3">Expressed in salivary glands and Malpighian tubules.</text>
</comment>
<comment type="developmental stage">
    <text evidence="3">Expressed at all developmental stages, highest expression is in the adult.</text>
</comment>
<comment type="induction">
    <text evidence="3">By bacterial infection, expression significantly increases 6-12 hours post challenge with bacteria.</text>
</comment>
<comment type="similarity">
    <text evidence="2">Belongs to the glycosyl hydrolase 22 family.</text>
</comment>
<accession>Q17005</accession>
<accession>Q4ZIL2</accession>
<accession>Q7PF88</accession>
<organism>
    <name type="scientific">Anopheles gambiae</name>
    <name type="common">African malaria mosquito</name>
    <dbReference type="NCBI Taxonomy" id="7165"/>
    <lineage>
        <taxon>Eukaryota</taxon>
        <taxon>Metazoa</taxon>
        <taxon>Ecdysozoa</taxon>
        <taxon>Arthropoda</taxon>
        <taxon>Hexapoda</taxon>
        <taxon>Insecta</taxon>
        <taxon>Pterygota</taxon>
        <taxon>Neoptera</taxon>
        <taxon>Endopterygota</taxon>
        <taxon>Diptera</taxon>
        <taxon>Nematocera</taxon>
        <taxon>Culicoidea</taxon>
        <taxon>Culicidae</taxon>
        <taxon>Anophelinae</taxon>
        <taxon>Anopheles</taxon>
    </lineage>
</organism>
<keyword id="KW-0929">Antimicrobial</keyword>
<keyword id="KW-0081">Bacteriolytic enzyme</keyword>
<keyword id="KW-1015">Disulfide bond</keyword>
<keyword id="KW-0326">Glycosidase</keyword>
<keyword id="KW-0378">Hydrolase</keyword>
<keyword id="KW-1185">Reference proteome</keyword>
<keyword id="KW-0732">Signal</keyword>
<gene>
    <name type="ORF">AGAP007347</name>
</gene>
<proteinExistence type="evidence at transcript level"/>
<feature type="signal peptide" evidence="1">
    <location>
        <begin position="1"/>
        <end position="20"/>
    </location>
</feature>
<feature type="chain" id="PRO_0000018504" description="Lysozyme c-1">
    <location>
        <begin position="21"/>
        <end position="140"/>
    </location>
</feature>
<feature type="domain" description="C-type lysozyme" evidence="2">
    <location>
        <begin position="21"/>
        <end position="140"/>
    </location>
</feature>
<feature type="active site" evidence="2">
    <location>
        <position position="52"/>
    </location>
</feature>
<feature type="active site" evidence="2">
    <location>
        <position position="69"/>
    </location>
</feature>
<feature type="disulfide bond" evidence="2">
    <location>
        <begin position="26"/>
        <end position="139"/>
    </location>
</feature>
<feature type="disulfide bond" evidence="2">
    <location>
        <begin position="47"/>
        <end position="128"/>
    </location>
</feature>
<feature type="disulfide bond" evidence="2">
    <location>
        <begin position="81"/>
        <end position="94"/>
    </location>
</feature>
<feature type="disulfide bond" evidence="2">
    <location>
        <begin position="90"/>
        <end position="108"/>
    </location>
</feature>
<feature type="sequence conflict" description="In Ref. 1; AAC47326." evidence="4" ref="1">
    <original>S</original>
    <variation>F</variation>
    <location>
        <position position="5"/>
    </location>
</feature>
<protein>
    <recommendedName>
        <fullName>Lysozyme c-1</fullName>
        <ecNumber>3.2.1.17</ecNumber>
    </recommendedName>
    <alternativeName>
        <fullName>1,4-beta-N-acetylmuramidase</fullName>
    </alternativeName>
</protein>